<accession>A5D1P8</accession>
<organism>
    <name type="scientific">Pelotomaculum thermopropionicum (strain DSM 13744 / JCM 10971 / SI)</name>
    <dbReference type="NCBI Taxonomy" id="370438"/>
    <lineage>
        <taxon>Bacteria</taxon>
        <taxon>Bacillati</taxon>
        <taxon>Bacillota</taxon>
        <taxon>Clostridia</taxon>
        <taxon>Eubacteriales</taxon>
        <taxon>Desulfotomaculaceae</taxon>
        <taxon>Pelotomaculum</taxon>
    </lineage>
</organism>
<comment type="subcellular location">
    <subcellularLocation>
        <location evidence="1">Cell membrane</location>
        <topology evidence="1">Multi-pass membrane protein</topology>
    </subcellularLocation>
</comment>
<comment type="similarity">
    <text evidence="1">Belongs to the UPF0756 family.</text>
</comment>
<gene>
    <name type="ordered locus">PTH_1668</name>
</gene>
<evidence type="ECO:0000255" key="1">
    <source>
        <dbReference type="HAMAP-Rule" id="MF_01874"/>
    </source>
</evidence>
<keyword id="KW-1003">Cell membrane</keyword>
<keyword id="KW-0472">Membrane</keyword>
<keyword id="KW-1185">Reference proteome</keyword>
<keyword id="KW-0812">Transmembrane</keyword>
<keyword id="KW-1133">Transmembrane helix</keyword>
<sequence length="159" mass="17011">MSTNFFFAFESSEMILITLLFLGLFGRSNLVVSSSCILLCLKYFKLDQLVFPVLESRGLELGLVLLMLHILSPVATEKLTIKDLHSVTSLKGLFALAAGTLATKLNGDGLALMNARPEIIFGLTVGTVLGILFLRGTPCGPVMAAAVTAVFLQIASLFS</sequence>
<feature type="chain" id="PRO_0000388918" description="UPF0756 membrane protein PTH_1668">
    <location>
        <begin position="1"/>
        <end position="159"/>
    </location>
</feature>
<feature type="transmembrane region" description="Helical" evidence="1">
    <location>
        <begin position="15"/>
        <end position="37"/>
    </location>
</feature>
<feature type="transmembrane region" description="Helical" evidence="1">
    <location>
        <begin position="61"/>
        <end position="81"/>
    </location>
</feature>
<feature type="transmembrane region" description="Helical" evidence="1">
    <location>
        <begin position="117"/>
        <end position="137"/>
    </location>
</feature>
<feature type="transmembrane region" description="Helical" evidence="1">
    <location>
        <begin position="138"/>
        <end position="158"/>
    </location>
</feature>
<name>Y1668_PELTS</name>
<protein>
    <recommendedName>
        <fullName evidence="1">UPF0756 membrane protein PTH_1668</fullName>
    </recommendedName>
</protein>
<reference key="1">
    <citation type="journal article" date="2008" name="Genome Res.">
        <title>The genome of Pelotomaculum thermopropionicum reveals niche-associated evolution in anaerobic microbiota.</title>
        <authorList>
            <person name="Kosaka T."/>
            <person name="Kato S."/>
            <person name="Shimoyama T."/>
            <person name="Ishii S."/>
            <person name="Abe T."/>
            <person name="Watanabe K."/>
        </authorList>
    </citation>
    <scope>NUCLEOTIDE SEQUENCE [LARGE SCALE GENOMIC DNA]</scope>
    <source>
        <strain>DSM 13744 / JCM 10971 / SI</strain>
    </source>
</reference>
<proteinExistence type="inferred from homology"/>
<dbReference type="EMBL" id="AP009389">
    <property type="protein sequence ID" value="BAF59850.1"/>
    <property type="molecule type" value="Genomic_DNA"/>
</dbReference>
<dbReference type="SMR" id="A5D1P8"/>
<dbReference type="STRING" id="370438.PTH_1668"/>
<dbReference type="KEGG" id="pth:PTH_1668"/>
<dbReference type="eggNOG" id="COG2707">
    <property type="taxonomic scope" value="Bacteria"/>
</dbReference>
<dbReference type="HOGENOM" id="CLU_125889_0_0_9"/>
<dbReference type="Proteomes" id="UP000006556">
    <property type="component" value="Chromosome"/>
</dbReference>
<dbReference type="GO" id="GO:0005886">
    <property type="term" value="C:plasma membrane"/>
    <property type="evidence" value="ECO:0007669"/>
    <property type="project" value="UniProtKB-SubCell"/>
</dbReference>
<dbReference type="HAMAP" id="MF_01874">
    <property type="entry name" value="UPF0756"/>
    <property type="match status" value="1"/>
</dbReference>
<dbReference type="InterPro" id="IPR007382">
    <property type="entry name" value="UPF0756_TM"/>
</dbReference>
<dbReference type="PANTHER" id="PTHR38452">
    <property type="entry name" value="UPF0756 MEMBRANE PROTEIN YEAL"/>
    <property type="match status" value="1"/>
</dbReference>
<dbReference type="PANTHER" id="PTHR38452:SF1">
    <property type="entry name" value="UPF0756 MEMBRANE PROTEIN YEAL"/>
    <property type="match status" value="1"/>
</dbReference>
<dbReference type="Pfam" id="PF04284">
    <property type="entry name" value="DUF441"/>
    <property type="match status" value="1"/>
</dbReference>